<keyword id="KW-0687">Ribonucleoprotein</keyword>
<keyword id="KW-0689">Ribosomal protein</keyword>
<keyword id="KW-0694">RNA-binding</keyword>
<keyword id="KW-0699">rRNA-binding</keyword>
<organism>
    <name type="scientific">Dehalococcoides mccartyi (strain ATCC BAA-2266 / KCTC 15142 / 195)</name>
    <name type="common">Dehalococcoides ethenogenes (strain 195)</name>
    <dbReference type="NCBI Taxonomy" id="243164"/>
    <lineage>
        <taxon>Bacteria</taxon>
        <taxon>Bacillati</taxon>
        <taxon>Chloroflexota</taxon>
        <taxon>Dehalococcoidia</taxon>
        <taxon>Dehalococcoidales</taxon>
        <taxon>Dehalococcoidaceae</taxon>
        <taxon>Dehalococcoides</taxon>
    </lineage>
</organism>
<sequence>MAASELLKSRVENLRDYELVVILTTDTPKEKVEAILEGISKTIAEKDGSFTEVNHWGKRKLAYLIGRYGEGYYVFIKMKAKPSSIRKINADLRISEQVIRHMAINMDEE</sequence>
<comment type="function">
    <text evidence="1">Binds together with bS18 to 16S ribosomal RNA.</text>
</comment>
<comment type="similarity">
    <text evidence="1">Belongs to the bacterial ribosomal protein bS6 family.</text>
</comment>
<feature type="chain" id="PRO_0000229537" description="Small ribosomal subunit protein bS6">
    <location>
        <begin position="1"/>
        <end position="109"/>
    </location>
</feature>
<evidence type="ECO:0000255" key="1">
    <source>
        <dbReference type="HAMAP-Rule" id="MF_00360"/>
    </source>
</evidence>
<evidence type="ECO:0000305" key="2"/>
<accession>Q3Z7N7</accession>
<reference key="1">
    <citation type="journal article" date="2005" name="Science">
        <title>Genome sequence of the PCE-dechlorinating bacterium Dehalococcoides ethenogenes.</title>
        <authorList>
            <person name="Seshadri R."/>
            <person name="Adrian L."/>
            <person name="Fouts D.E."/>
            <person name="Eisen J.A."/>
            <person name="Phillippy A.M."/>
            <person name="Methe B.A."/>
            <person name="Ward N.L."/>
            <person name="Nelson W.C."/>
            <person name="DeBoy R.T."/>
            <person name="Khouri H.M."/>
            <person name="Kolonay J.F."/>
            <person name="Dodson R.J."/>
            <person name="Daugherty S.C."/>
            <person name="Brinkac L.M."/>
            <person name="Sullivan S.A."/>
            <person name="Madupu R."/>
            <person name="Nelson K.E."/>
            <person name="Kang K.H."/>
            <person name="Impraim M."/>
            <person name="Tran K."/>
            <person name="Robinson J.M."/>
            <person name="Forberger H.A."/>
            <person name="Fraser C.M."/>
            <person name="Zinder S.H."/>
            <person name="Heidelberg J.F."/>
        </authorList>
    </citation>
    <scope>NUCLEOTIDE SEQUENCE [LARGE SCALE GENOMIC DNA]</scope>
    <source>
        <strain>ATCC BAA-2266 / KCTC 15142 / 195</strain>
    </source>
</reference>
<gene>
    <name evidence="1" type="primary">rpsF</name>
    <name type="ordered locus">DET1046</name>
</gene>
<proteinExistence type="inferred from homology"/>
<protein>
    <recommendedName>
        <fullName evidence="1">Small ribosomal subunit protein bS6</fullName>
    </recommendedName>
    <alternativeName>
        <fullName evidence="2">30S ribosomal protein S6</fullName>
    </alternativeName>
</protein>
<name>RS6_DEHM1</name>
<dbReference type="EMBL" id="CP000027">
    <property type="protein sequence ID" value="AAW39690.1"/>
    <property type="molecule type" value="Genomic_DNA"/>
</dbReference>
<dbReference type="RefSeq" id="WP_010936741.1">
    <property type="nucleotide sequence ID" value="NC_002936.3"/>
</dbReference>
<dbReference type="SMR" id="Q3Z7N7"/>
<dbReference type="FunCoup" id="Q3Z7N7">
    <property type="interactions" value="290"/>
</dbReference>
<dbReference type="STRING" id="243164.DET1046"/>
<dbReference type="GeneID" id="3229652"/>
<dbReference type="KEGG" id="det:DET1046"/>
<dbReference type="eggNOG" id="COG0360">
    <property type="taxonomic scope" value="Bacteria"/>
</dbReference>
<dbReference type="HOGENOM" id="CLU_113441_5_1_0"/>
<dbReference type="InParanoid" id="Q3Z7N7"/>
<dbReference type="Proteomes" id="UP000008289">
    <property type="component" value="Chromosome"/>
</dbReference>
<dbReference type="GO" id="GO:0005737">
    <property type="term" value="C:cytoplasm"/>
    <property type="evidence" value="ECO:0007669"/>
    <property type="project" value="UniProtKB-ARBA"/>
</dbReference>
<dbReference type="GO" id="GO:1990904">
    <property type="term" value="C:ribonucleoprotein complex"/>
    <property type="evidence" value="ECO:0007669"/>
    <property type="project" value="UniProtKB-KW"/>
</dbReference>
<dbReference type="GO" id="GO:0005840">
    <property type="term" value="C:ribosome"/>
    <property type="evidence" value="ECO:0007669"/>
    <property type="project" value="UniProtKB-KW"/>
</dbReference>
<dbReference type="GO" id="GO:0070181">
    <property type="term" value="F:small ribosomal subunit rRNA binding"/>
    <property type="evidence" value="ECO:0007669"/>
    <property type="project" value="TreeGrafter"/>
</dbReference>
<dbReference type="GO" id="GO:0003735">
    <property type="term" value="F:structural constituent of ribosome"/>
    <property type="evidence" value="ECO:0007669"/>
    <property type="project" value="InterPro"/>
</dbReference>
<dbReference type="GO" id="GO:0006412">
    <property type="term" value="P:translation"/>
    <property type="evidence" value="ECO:0007669"/>
    <property type="project" value="UniProtKB-UniRule"/>
</dbReference>
<dbReference type="CDD" id="cd00473">
    <property type="entry name" value="bS6"/>
    <property type="match status" value="1"/>
</dbReference>
<dbReference type="Gene3D" id="3.30.70.60">
    <property type="match status" value="1"/>
</dbReference>
<dbReference type="HAMAP" id="MF_00360">
    <property type="entry name" value="Ribosomal_bS6"/>
    <property type="match status" value="1"/>
</dbReference>
<dbReference type="InterPro" id="IPR000529">
    <property type="entry name" value="Ribosomal_bS6"/>
</dbReference>
<dbReference type="InterPro" id="IPR035980">
    <property type="entry name" value="Ribosomal_bS6_sf"/>
</dbReference>
<dbReference type="InterPro" id="IPR020814">
    <property type="entry name" value="Ribosomal_S6_plastid/chlpt"/>
</dbReference>
<dbReference type="InterPro" id="IPR014717">
    <property type="entry name" value="Transl_elong_EF1B/ribsomal_bS6"/>
</dbReference>
<dbReference type="NCBIfam" id="TIGR00166">
    <property type="entry name" value="S6"/>
    <property type="match status" value="1"/>
</dbReference>
<dbReference type="PANTHER" id="PTHR21011">
    <property type="entry name" value="MITOCHONDRIAL 28S RIBOSOMAL PROTEIN S6"/>
    <property type="match status" value="1"/>
</dbReference>
<dbReference type="PANTHER" id="PTHR21011:SF1">
    <property type="entry name" value="SMALL RIBOSOMAL SUBUNIT PROTEIN BS6M"/>
    <property type="match status" value="1"/>
</dbReference>
<dbReference type="Pfam" id="PF01250">
    <property type="entry name" value="Ribosomal_S6"/>
    <property type="match status" value="1"/>
</dbReference>
<dbReference type="SUPFAM" id="SSF54995">
    <property type="entry name" value="Ribosomal protein S6"/>
    <property type="match status" value="1"/>
</dbReference>